<reference key="1">
    <citation type="submission" date="1995-12" db="EMBL/GenBank/DDBJ databases">
        <authorList>
            <person name="Irikura D."/>
            <person name="Maruyama T."/>
            <person name="Kanaoka Y."/>
            <person name="Urade Y."/>
        </authorList>
    </citation>
    <scope>NUCLEOTIDE SEQUENCE [MRNA]</scope>
    <source>
        <tissue>Arachnoid membrane</tissue>
    </source>
</reference>
<feature type="signal peptide" evidence="1">
    <location>
        <begin position="1"/>
        <end position="24"/>
    </location>
</feature>
<feature type="chain" id="PRO_0000017952" description="Prostaglandin-H2 D-isomerase">
    <location>
        <begin position="25"/>
        <end position="191"/>
    </location>
</feature>
<feature type="active site" description="Nucleophile" evidence="4">
    <location>
        <position position="65"/>
    </location>
</feature>
<feature type="modified residue" description="Pyrrolidone carboxylic acid" evidence="3">
    <location>
        <position position="25"/>
    </location>
</feature>
<feature type="glycosylation site" description="N-linked (GlcNAc...) asparagine" evidence="1">
    <location>
        <position position="51"/>
    </location>
</feature>
<feature type="glycosylation site" description="N-linked (GlcNAc...) asparagine" evidence="1">
    <location>
        <position position="78"/>
    </location>
</feature>
<feature type="disulfide bond" evidence="2">
    <location>
        <begin position="89"/>
        <end position="186"/>
    </location>
</feature>
<proteinExistence type="evidence at transcript level"/>
<organism>
    <name type="scientific">Ursus arctos</name>
    <name type="common">Brown bear</name>
    <name type="synonym">Grizzly bear</name>
    <dbReference type="NCBI Taxonomy" id="9644"/>
    <lineage>
        <taxon>Eukaryota</taxon>
        <taxon>Metazoa</taxon>
        <taxon>Chordata</taxon>
        <taxon>Craniata</taxon>
        <taxon>Vertebrata</taxon>
        <taxon>Euteleostomi</taxon>
        <taxon>Mammalia</taxon>
        <taxon>Eutheria</taxon>
        <taxon>Laurasiatheria</taxon>
        <taxon>Carnivora</taxon>
        <taxon>Caniformia</taxon>
        <taxon>Ursidae</taxon>
        <taxon>Ursus</taxon>
    </lineage>
</organism>
<keyword id="KW-0963">Cytoplasm</keyword>
<keyword id="KW-1015">Disulfide bond</keyword>
<keyword id="KW-0256">Endoplasmic reticulum</keyword>
<keyword id="KW-0275">Fatty acid biosynthesis</keyword>
<keyword id="KW-0276">Fatty acid metabolism</keyword>
<keyword id="KW-0325">Glycoprotein</keyword>
<keyword id="KW-0333">Golgi apparatus</keyword>
<keyword id="KW-0413">Isomerase</keyword>
<keyword id="KW-0444">Lipid biosynthesis</keyword>
<keyword id="KW-0443">Lipid metabolism</keyword>
<keyword id="KW-0467">Mast cell degranulation</keyword>
<keyword id="KW-0472">Membrane</keyword>
<keyword id="KW-0539">Nucleus</keyword>
<keyword id="KW-0643">Prostaglandin biosynthesis</keyword>
<keyword id="KW-0644">Prostaglandin metabolism</keyword>
<keyword id="KW-0873">Pyrrolidone carboxylic acid</keyword>
<keyword id="KW-0964">Secreted</keyword>
<keyword id="KW-0732">Signal</keyword>
<keyword id="KW-0813">Transport</keyword>
<accession>Q29562</accession>
<comment type="function">
    <text evidence="1 2 4">Catalyzes the conversion of PGH2 to PGD2, a prostaglandin involved in smooth muscle contraction/relaxation and a potent inhibitor of platelet aggregation. Involved in a variety of CNS functions, such as sedation, NREM sleep and PGE2-induced allodynia, and may have an anti-apoptotic role in oligodendrocytes. Binds small non-substrate lipophilic molecules, including biliverdin, bilirubin, retinal, retinoic acid and thyroid hormone, and may act as a scavenger for harmful hydrophobic molecules and as a secretory retinoid and thyroid hormone transporter. Possibly involved in development and maintenance of the blood-brain, blood-retina, blood-aqueous humor and blood-testis barrier. It is likely to play important roles in both maturation and maintenance of the central nervous system and male reproductive system (By similarity). Involved in PLA2G3-dependent maturation of mast cells. PLA2G3 is secreted by immature mast cells and acts on nearby fibroblasts upstream to PTDGS to synthesize PGD2, which in turn promotes mast cell maturation and degranulation via PTGDR (By similarity).</text>
</comment>
<comment type="catalytic activity">
    <reaction evidence="4">
        <text>prostaglandin H2 = prostaglandin D2</text>
        <dbReference type="Rhea" id="RHEA:10600"/>
        <dbReference type="ChEBI" id="CHEBI:57405"/>
        <dbReference type="ChEBI" id="CHEBI:57406"/>
        <dbReference type="EC" id="5.3.99.2"/>
    </reaction>
</comment>
<comment type="subunit">
    <text evidence="4">Monomer.</text>
</comment>
<comment type="subcellular location">
    <subcellularLocation>
        <location evidence="4">Rough endoplasmic reticulum</location>
    </subcellularLocation>
    <subcellularLocation>
        <location evidence="4">Nucleus membrane</location>
    </subcellularLocation>
    <subcellularLocation>
        <location evidence="4">Golgi apparatus</location>
    </subcellularLocation>
    <subcellularLocation>
        <location evidence="4">Cytoplasm</location>
        <location evidence="4">Perinuclear region</location>
    </subcellularLocation>
    <subcellularLocation>
        <location evidence="4">Secreted</location>
    </subcellularLocation>
    <text evidence="4">Detected on rough endoplasmic reticulum of arachnoid and menigioma cells. Localized to the nuclear envelope, Golgi apparatus, secretory vesicles and spherical cytoplasmic structures in arachnoid trabecular cells, and to circular cytoplasmic structures in meningeal macrophages and perivascular microglial cells. In oligodendrocytes, localized to the rough endoplasmic reticulum and nuclear envelope. In retinal pigment epithelial cells, localized to distinct cytoplasmic domains including the perinuclear region. Also secreted.</text>
</comment>
<comment type="domain">
    <text evidence="4">Forms a beta-barrel structure that accommodates hydrophobic ligands in its interior.</text>
</comment>
<comment type="similarity">
    <text evidence="5">Belongs to the calycin superfamily. Lipocalin family.</text>
</comment>
<dbReference type="EC" id="5.3.99.2" evidence="4"/>
<dbReference type="EMBL" id="D82047">
    <property type="protein sequence ID" value="BAA11520.1"/>
    <property type="molecule type" value="mRNA"/>
</dbReference>
<dbReference type="RefSeq" id="XP_026345881.1">
    <property type="nucleotide sequence ID" value="XM_026490096.4"/>
</dbReference>
<dbReference type="SMR" id="Q29562"/>
<dbReference type="GlyCosmos" id="Q29562">
    <property type="glycosylation" value="2 sites, No reported glycans"/>
</dbReference>
<dbReference type="GeneID" id="113248563"/>
<dbReference type="GO" id="GO:0005576">
    <property type="term" value="C:extracellular region"/>
    <property type="evidence" value="ECO:0000250"/>
    <property type="project" value="UniProtKB"/>
</dbReference>
<dbReference type="GO" id="GO:0005615">
    <property type="term" value="C:extracellular space"/>
    <property type="evidence" value="ECO:0000250"/>
    <property type="project" value="UniProtKB"/>
</dbReference>
<dbReference type="GO" id="GO:0005794">
    <property type="term" value="C:Golgi apparatus"/>
    <property type="evidence" value="ECO:0000250"/>
    <property type="project" value="UniProtKB"/>
</dbReference>
<dbReference type="GO" id="GO:0031965">
    <property type="term" value="C:nuclear membrane"/>
    <property type="evidence" value="ECO:0007669"/>
    <property type="project" value="UniProtKB-SubCell"/>
</dbReference>
<dbReference type="GO" id="GO:0048471">
    <property type="term" value="C:perinuclear region of cytoplasm"/>
    <property type="evidence" value="ECO:0007669"/>
    <property type="project" value="UniProtKB-SubCell"/>
</dbReference>
<dbReference type="GO" id="GO:0005791">
    <property type="term" value="C:rough endoplasmic reticulum"/>
    <property type="evidence" value="ECO:0000250"/>
    <property type="project" value="UniProtKB"/>
</dbReference>
<dbReference type="GO" id="GO:0004667">
    <property type="term" value="F:prostaglandin-D synthase activity"/>
    <property type="evidence" value="ECO:0000250"/>
    <property type="project" value="UniProtKB"/>
</dbReference>
<dbReference type="GO" id="GO:0005501">
    <property type="term" value="F:retinoid binding"/>
    <property type="evidence" value="ECO:0000250"/>
    <property type="project" value="UniProtKB"/>
</dbReference>
<dbReference type="GO" id="GO:0036094">
    <property type="term" value="F:small molecule binding"/>
    <property type="evidence" value="ECO:0007669"/>
    <property type="project" value="InterPro"/>
</dbReference>
<dbReference type="GO" id="GO:0043303">
    <property type="term" value="P:mast cell degranulation"/>
    <property type="evidence" value="ECO:0007669"/>
    <property type="project" value="UniProtKB-KW"/>
</dbReference>
<dbReference type="GO" id="GO:0001516">
    <property type="term" value="P:prostaglandin biosynthetic process"/>
    <property type="evidence" value="ECO:0000250"/>
    <property type="project" value="UniProtKB"/>
</dbReference>
<dbReference type="GO" id="GO:0045187">
    <property type="term" value="P:regulation of circadian sleep/wake cycle, sleep"/>
    <property type="evidence" value="ECO:0000250"/>
    <property type="project" value="UniProtKB"/>
</dbReference>
<dbReference type="FunFam" id="2.40.128.20:FF:000010">
    <property type="entry name" value="Prostaglandin-H2 D-isomerase"/>
    <property type="match status" value="1"/>
</dbReference>
<dbReference type="Gene3D" id="2.40.128.20">
    <property type="match status" value="1"/>
</dbReference>
<dbReference type="InterPro" id="IPR012674">
    <property type="entry name" value="Calycin"/>
</dbReference>
<dbReference type="InterPro" id="IPR002345">
    <property type="entry name" value="Lipocalin"/>
</dbReference>
<dbReference type="InterPro" id="IPR000566">
    <property type="entry name" value="Lipocln_cytosolic_FA-bd_dom"/>
</dbReference>
<dbReference type="PANTHER" id="PTHR11430">
    <property type="entry name" value="LIPOCALIN"/>
    <property type="match status" value="1"/>
</dbReference>
<dbReference type="PANTHER" id="PTHR11430:SF86">
    <property type="entry name" value="PROSTAGLANDIN-H2 D-ISOMERASE"/>
    <property type="match status" value="1"/>
</dbReference>
<dbReference type="Pfam" id="PF00061">
    <property type="entry name" value="Lipocalin"/>
    <property type="match status" value="1"/>
</dbReference>
<dbReference type="PRINTS" id="PR00179">
    <property type="entry name" value="LIPOCALIN"/>
</dbReference>
<dbReference type="PRINTS" id="PR01254">
    <property type="entry name" value="PGNDSYNTHASE"/>
</dbReference>
<dbReference type="SUPFAM" id="SSF50814">
    <property type="entry name" value="Lipocalins"/>
    <property type="match status" value="1"/>
</dbReference>
<name>PTGDS_URSAR</name>
<protein>
    <recommendedName>
        <fullName>Prostaglandin-H2 D-isomerase</fullName>
        <ecNumber evidence="4">5.3.99.2</ecNumber>
    </recommendedName>
    <alternativeName>
        <fullName>Glutathione-independent PGD synthase</fullName>
    </alternativeName>
    <alternativeName>
        <fullName>Lipocalin-type prostaglandin-D synthase</fullName>
    </alternativeName>
    <alternativeName>
        <fullName>Prostaglandin-D2 synthase</fullName>
        <shortName>PGD2 synthase</shortName>
        <shortName>PGDS</shortName>
        <shortName>PGDS2</shortName>
    </alternativeName>
</protein>
<evidence type="ECO:0000250" key="1"/>
<evidence type="ECO:0000250" key="2">
    <source>
        <dbReference type="UniProtKB" id="O09114"/>
    </source>
</evidence>
<evidence type="ECO:0000250" key="3">
    <source>
        <dbReference type="UniProtKB" id="P22057"/>
    </source>
</evidence>
<evidence type="ECO:0000250" key="4">
    <source>
        <dbReference type="UniProtKB" id="P41222"/>
    </source>
</evidence>
<evidence type="ECO:0000305" key="5"/>
<gene>
    <name type="primary">PTGDS</name>
</gene>
<sequence length="191" mass="21415">MAALHTLWMGLVLLGVLGVLQTQAQVQVSLQPNFQQDKFLGRWFTSGLASNSSWFREKKKVLSMCVSVVAPSADGGLNLTSTFLRKEQCETRTLLLRPAGTPGCYSYTSPHWGSTHDVWVAMTDYDEYALLYTTGTKGLGQDFHMATLYSRTQTPRAEIKEKFTTFAKTQGFTEDAIVFLPQTDKCMEEHK</sequence>